<gene>
    <name type="primary">yrkA</name>
    <name type="ordered locus">BSU26610</name>
</gene>
<sequence>MTTINLIIFTLLIVLTAFFVATEFAIVKIRSSKIDQLILEGKKGAISAKKVITHLDEYLSACQLGITVTALGIGWVGESTFEVILHPLFAHFHVSETVSHVLILVIAFVMATFLHVVVGELAPKTLAIQKAETITLLTAKPIIWFYRILFPFIWFLNGSARFIVGLFGLKPASEHELAHSEEELRILLSESYKSGEINQNELKYVNNIFEFDERIAKEIMIPRREIVAISSEDSYETIVKIIKTESYTRYPVLNGDKDSIIGFINAKEFLSAYIDTDQKIKEDFKLENHINPVIHVIESVPIHDVLVKMQKERTHIAILVDEYGGTSGLVTAEDILEEIVGEIRDEFDKDEVPNIRKVNDNHYILDSKVLIEDVNDLLGTTLASDEVDTIGGWFMTQQIDAAVGSVIEADGYIFKVHETVGRHINYLEIVRKKE</sequence>
<protein>
    <recommendedName>
        <fullName>UPF0053 protein YrkA</fullName>
    </recommendedName>
</protein>
<reference key="1">
    <citation type="journal article" date="1997" name="Microbiology">
        <title>Sequence of the Bacillus subtilis genome region in the vicinity of the lev operon reveals two new extracytoplasmic function RNA polymerase sigma factors SigV and SigZ.</title>
        <authorList>
            <person name="Sorokin A."/>
            <person name="Bolotin A."/>
            <person name="Purnelle B."/>
            <person name="Hilbert H."/>
            <person name="Lauber J."/>
            <person name="Duesterhoeft A."/>
            <person name="Ehrlich S.D."/>
        </authorList>
    </citation>
    <scope>NUCLEOTIDE SEQUENCE [GENOMIC DNA]</scope>
    <source>
        <strain>168</strain>
    </source>
</reference>
<reference key="2">
    <citation type="journal article" date="1997" name="Nature">
        <title>The complete genome sequence of the Gram-positive bacterium Bacillus subtilis.</title>
        <authorList>
            <person name="Kunst F."/>
            <person name="Ogasawara N."/>
            <person name="Moszer I."/>
            <person name="Albertini A.M."/>
            <person name="Alloni G."/>
            <person name="Azevedo V."/>
            <person name="Bertero M.G."/>
            <person name="Bessieres P."/>
            <person name="Bolotin A."/>
            <person name="Borchert S."/>
            <person name="Borriss R."/>
            <person name="Boursier L."/>
            <person name="Brans A."/>
            <person name="Braun M."/>
            <person name="Brignell S.C."/>
            <person name="Bron S."/>
            <person name="Brouillet S."/>
            <person name="Bruschi C.V."/>
            <person name="Caldwell B."/>
            <person name="Capuano V."/>
            <person name="Carter N.M."/>
            <person name="Choi S.-K."/>
            <person name="Codani J.-J."/>
            <person name="Connerton I.F."/>
            <person name="Cummings N.J."/>
            <person name="Daniel R.A."/>
            <person name="Denizot F."/>
            <person name="Devine K.M."/>
            <person name="Duesterhoeft A."/>
            <person name="Ehrlich S.D."/>
            <person name="Emmerson P.T."/>
            <person name="Entian K.-D."/>
            <person name="Errington J."/>
            <person name="Fabret C."/>
            <person name="Ferrari E."/>
            <person name="Foulger D."/>
            <person name="Fritz C."/>
            <person name="Fujita M."/>
            <person name="Fujita Y."/>
            <person name="Fuma S."/>
            <person name="Galizzi A."/>
            <person name="Galleron N."/>
            <person name="Ghim S.-Y."/>
            <person name="Glaser P."/>
            <person name="Goffeau A."/>
            <person name="Golightly E.J."/>
            <person name="Grandi G."/>
            <person name="Guiseppi G."/>
            <person name="Guy B.J."/>
            <person name="Haga K."/>
            <person name="Haiech J."/>
            <person name="Harwood C.R."/>
            <person name="Henaut A."/>
            <person name="Hilbert H."/>
            <person name="Holsappel S."/>
            <person name="Hosono S."/>
            <person name="Hullo M.-F."/>
            <person name="Itaya M."/>
            <person name="Jones L.-M."/>
            <person name="Joris B."/>
            <person name="Karamata D."/>
            <person name="Kasahara Y."/>
            <person name="Klaerr-Blanchard M."/>
            <person name="Klein C."/>
            <person name="Kobayashi Y."/>
            <person name="Koetter P."/>
            <person name="Koningstein G."/>
            <person name="Krogh S."/>
            <person name="Kumano M."/>
            <person name="Kurita K."/>
            <person name="Lapidus A."/>
            <person name="Lardinois S."/>
            <person name="Lauber J."/>
            <person name="Lazarevic V."/>
            <person name="Lee S.-M."/>
            <person name="Levine A."/>
            <person name="Liu H."/>
            <person name="Masuda S."/>
            <person name="Mauel C."/>
            <person name="Medigue C."/>
            <person name="Medina N."/>
            <person name="Mellado R.P."/>
            <person name="Mizuno M."/>
            <person name="Moestl D."/>
            <person name="Nakai S."/>
            <person name="Noback M."/>
            <person name="Noone D."/>
            <person name="O'Reilly M."/>
            <person name="Ogawa K."/>
            <person name="Ogiwara A."/>
            <person name="Oudega B."/>
            <person name="Park S.-H."/>
            <person name="Parro V."/>
            <person name="Pohl T.M."/>
            <person name="Portetelle D."/>
            <person name="Porwollik S."/>
            <person name="Prescott A.M."/>
            <person name="Presecan E."/>
            <person name="Pujic P."/>
            <person name="Purnelle B."/>
            <person name="Rapoport G."/>
            <person name="Rey M."/>
            <person name="Reynolds S."/>
            <person name="Rieger M."/>
            <person name="Rivolta C."/>
            <person name="Rocha E."/>
            <person name="Roche B."/>
            <person name="Rose M."/>
            <person name="Sadaie Y."/>
            <person name="Sato T."/>
            <person name="Scanlan E."/>
            <person name="Schleich S."/>
            <person name="Schroeter R."/>
            <person name="Scoffone F."/>
            <person name="Sekiguchi J."/>
            <person name="Sekowska A."/>
            <person name="Seror S.J."/>
            <person name="Serror P."/>
            <person name="Shin B.-S."/>
            <person name="Soldo B."/>
            <person name="Sorokin A."/>
            <person name="Tacconi E."/>
            <person name="Takagi T."/>
            <person name="Takahashi H."/>
            <person name="Takemaru K."/>
            <person name="Takeuchi M."/>
            <person name="Tamakoshi A."/>
            <person name="Tanaka T."/>
            <person name="Terpstra P."/>
            <person name="Tognoni A."/>
            <person name="Tosato V."/>
            <person name="Uchiyama S."/>
            <person name="Vandenbol M."/>
            <person name="Vannier F."/>
            <person name="Vassarotti A."/>
            <person name="Viari A."/>
            <person name="Wambutt R."/>
            <person name="Wedler E."/>
            <person name="Wedler H."/>
            <person name="Weitzenegger T."/>
            <person name="Winters P."/>
            <person name="Wipat A."/>
            <person name="Yamamoto H."/>
            <person name="Yamane K."/>
            <person name="Yasumoto K."/>
            <person name="Yata K."/>
            <person name="Yoshida K."/>
            <person name="Yoshikawa H.-F."/>
            <person name="Zumstein E."/>
            <person name="Yoshikawa H."/>
            <person name="Danchin A."/>
        </authorList>
    </citation>
    <scope>NUCLEOTIDE SEQUENCE [LARGE SCALE GENOMIC DNA]</scope>
    <source>
        <strain>168</strain>
    </source>
</reference>
<reference key="3">
    <citation type="journal article" date="1996" name="Microbiology">
        <title>Systematic sequencing of the 283 kb 210 degrees-232 degrees region of the Bacillus subtilis genome containing the skin element and many sporulation genes.</title>
        <authorList>
            <person name="Mizuno M."/>
            <person name="Masuda S."/>
            <person name="Takemaru K."/>
            <person name="Hosono S."/>
            <person name="Sato T."/>
            <person name="Takeuchi M."/>
            <person name="Kobayashi Y."/>
        </authorList>
    </citation>
    <scope>NUCLEOTIDE SEQUENCE [GENOMIC DNA] OF 218-434</scope>
    <source>
        <strain>168 / JH642</strain>
    </source>
</reference>
<reference key="4">
    <citation type="journal article" date="1995" name="J. Bacteriol.">
        <title>Two highly similar multidrug transporters of Bacillus subtilis whose expression is differentially regulated.</title>
        <authorList>
            <person name="Ahmed M."/>
            <person name="Lyass L."/>
            <person name="Markham P.N."/>
            <person name="Taylor S.S."/>
            <person name="Vazquez-Laslop N."/>
            <person name="Neyfakh A.A."/>
        </authorList>
    </citation>
    <scope>NUCLEOTIDE SEQUENCE [GENOMIC DNA] OF 261-434</scope>
    <source>
        <strain>168 / BD170</strain>
    </source>
</reference>
<feature type="chain" id="PRO_0000088373" description="UPF0053 protein YrkA">
    <location>
        <begin position="1"/>
        <end position="434"/>
    </location>
</feature>
<feature type="transmembrane region" description="Helical" evidence="1">
    <location>
        <begin position="7"/>
        <end position="27"/>
    </location>
</feature>
<feature type="transmembrane region" description="Helical" evidence="1">
    <location>
        <begin position="64"/>
        <end position="84"/>
    </location>
</feature>
<feature type="transmembrane region" description="Helical" evidence="1">
    <location>
        <begin position="101"/>
        <end position="121"/>
    </location>
</feature>
<feature type="domain" description="CNNM transmembrane" evidence="3">
    <location>
        <begin position="1"/>
        <end position="201"/>
    </location>
</feature>
<feature type="domain" description="CBS 1" evidence="2">
    <location>
        <begin position="220"/>
        <end position="282"/>
    </location>
</feature>
<feature type="domain" description="CBS 2" evidence="2">
    <location>
        <begin position="289"/>
        <end position="346"/>
    </location>
</feature>
<feature type="sequence conflict" description="In Ref. 3." evidence="4" ref="3">
    <original>EIMIPRRE</original>
    <variation>VDLQVNGS</variation>
    <location>
        <begin position="218"/>
        <end position="225"/>
    </location>
</feature>
<feature type="sequence conflict" description="In Ref. 4." evidence="4" ref="4">
    <original>L</original>
    <variation>W</variation>
    <location>
        <position position="270"/>
    </location>
</feature>
<feature type="sequence conflict" description="In Ref. 4." evidence="4" ref="4">
    <original>T</original>
    <variation>P</variation>
    <location>
        <position position="276"/>
    </location>
</feature>
<feature type="sequence conflict" description="In Ref. 4." evidence="4" ref="4">
    <original>V</original>
    <variation>G</variation>
    <location>
        <position position="307"/>
    </location>
</feature>
<feature type="sequence conflict" description="In Ref. 4." evidence="4" ref="4">
    <original>Q</original>
    <variation>R</variation>
    <location>
        <position position="310"/>
    </location>
</feature>
<name>YRKA_BACSU</name>
<proteinExistence type="inferred from homology"/>
<dbReference type="EMBL" id="U93876">
    <property type="protein sequence ID" value="AAB80911.1"/>
    <property type="molecule type" value="Genomic_DNA"/>
</dbReference>
<dbReference type="EMBL" id="AL009126">
    <property type="protein sequence ID" value="CAB14602.1"/>
    <property type="molecule type" value="Genomic_DNA"/>
</dbReference>
<dbReference type="EMBL" id="D84432">
    <property type="protein sequence ID" value="BAA12353.1"/>
    <property type="molecule type" value="Genomic_DNA"/>
</dbReference>
<dbReference type="EMBL" id="L32599">
    <property type="status" value="NOT_ANNOTATED_CDS"/>
    <property type="molecule type" value="Genomic_DNA"/>
</dbReference>
<dbReference type="PIR" id="G69975">
    <property type="entry name" value="G69975"/>
</dbReference>
<dbReference type="RefSeq" id="NP_390538.1">
    <property type="nucleotide sequence ID" value="NC_000964.3"/>
</dbReference>
<dbReference type="RefSeq" id="WP_003246022.1">
    <property type="nucleotide sequence ID" value="NZ_OZ025638.1"/>
</dbReference>
<dbReference type="SMR" id="P54428"/>
<dbReference type="FunCoup" id="P54428">
    <property type="interactions" value="547"/>
</dbReference>
<dbReference type="STRING" id="224308.BSU26610"/>
<dbReference type="TCDB" id="1.A.112.2.2">
    <property type="family name" value="the cyclin m mg2+ exporter (cnnm) family"/>
</dbReference>
<dbReference type="PaxDb" id="224308-BSU26610"/>
<dbReference type="DNASU" id="937634"/>
<dbReference type="EnsemblBacteria" id="CAB14602">
    <property type="protein sequence ID" value="CAB14602"/>
    <property type="gene ID" value="BSU_26610"/>
</dbReference>
<dbReference type="GeneID" id="937634"/>
<dbReference type="KEGG" id="bsu:BSU26610"/>
<dbReference type="PATRIC" id="fig|224308.179.peg.2891"/>
<dbReference type="eggNOG" id="COG1253">
    <property type="taxonomic scope" value="Bacteria"/>
</dbReference>
<dbReference type="InParanoid" id="P54428"/>
<dbReference type="OrthoDB" id="9798188at2"/>
<dbReference type="PhylomeDB" id="P54428"/>
<dbReference type="BioCyc" id="BSUB:BSU26610-MONOMER"/>
<dbReference type="Proteomes" id="UP000001570">
    <property type="component" value="Chromosome"/>
</dbReference>
<dbReference type="GO" id="GO:0005886">
    <property type="term" value="C:plasma membrane"/>
    <property type="evidence" value="ECO:0007669"/>
    <property type="project" value="UniProtKB-SubCell"/>
</dbReference>
<dbReference type="GO" id="GO:0050660">
    <property type="term" value="F:flavin adenine dinucleotide binding"/>
    <property type="evidence" value="ECO:0007669"/>
    <property type="project" value="InterPro"/>
</dbReference>
<dbReference type="CDD" id="cd04590">
    <property type="entry name" value="CBS_pair_CorC_HlyC_assoc"/>
    <property type="match status" value="1"/>
</dbReference>
<dbReference type="FunFam" id="3.10.580.10:FF:000002">
    <property type="entry name" value="Magnesium/cobalt efflux protein CorC"/>
    <property type="match status" value="1"/>
</dbReference>
<dbReference type="Gene3D" id="3.30.465.10">
    <property type="match status" value="1"/>
</dbReference>
<dbReference type="Gene3D" id="3.10.580.10">
    <property type="entry name" value="CBS-domain"/>
    <property type="match status" value="1"/>
</dbReference>
<dbReference type="InterPro" id="IPR000644">
    <property type="entry name" value="CBS_dom"/>
</dbReference>
<dbReference type="InterPro" id="IPR046342">
    <property type="entry name" value="CBS_dom_sf"/>
</dbReference>
<dbReference type="InterPro" id="IPR002550">
    <property type="entry name" value="CNNM"/>
</dbReference>
<dbReference type="InterPro" id="IPR036318">
    <property type="entry name" value="FAD-bd_PCMH-like_sf"/>
</dbReference>
<dbReference type="InterPro" id="IPR016169">
    <property type="entry name" value="FAD-bd_PCMH_sub2"/>
</dbReference>
<dbReference type="InterPro" id="IPR044751">
    <property type="entry name" value="Ion_transp-like_CBS"/>
</dbReference>
<dbReference type="InterPro" id="IPR005170">
    <property type="entry name" value="Transptr-assoc_dom"/>
</dbReference>
<dbReference type="InterPro" id="IPR051676">
    <property type="entry name" value="UPF0053_domain"/>
</dbReference>
<dbReference type="PANTHER" id="PTHR43099">
    <property type="entry name" value="UPF0053 PROTEIN YRKA"/>
    <property type="match status" value="1"/>
</dbReference>
<dbReference type="PANTHER" id="PTHR43099:SF2">
    <property type="entry name" value="UPF0053 PROTEIN YRKA"/>
    <property type="match status" value="1"/>
</dbReference>
<dbReference type="Pfam" id="PF00571">
    <property type="entry name" value="CBS"/>
    <property type="match status" value="2"/>
</dbReference>
<dbReference type="Pfam" id="PF01595">
    <property type="entry name" value="CNNM"/>
    <property type="match status" value="1"/>
</dbReference>
<dbReference type="Pfam" id="PF03471">
    <property type="entry name" value="CorC_HlyC"/>
    <property type="match status" value="1"/>
</dbReference>
<dbReference type="SMART" id="SM01091">
    <property type="entry name" value="CorC_HlyC"/>
    <property type="match status" value="1"/>
</dbReference>
<dbReference type="SUPFAM" id="SSF54631">
    <property type="entry name" value="CBS-domain pair"/>
    <property type="match status" value="1"/>
</dbReference>
<dbReference type="SUPFAM" id="SSF56176">
    <property type="entry name" value="FAD-binding/transporter-associated domain-like"/>
    <property type="match status" value="1"/>
</dbReference>
<dbReference type="PROSITE" id="PS51371">
    <property type="entry name" value="CBS"/>
    <property type="match status" value="2"/>
</dbReference>
<dbReference type="PROSITE" id="PS51846">
    <property type="entry name" value="CNNM"/>
    <property type="match status" value="1"/>
</dbReference>
<accession>P54428</accession>
<accession>O07087</accession>
<organism>
    <name type="scientific">Bacillus subtilis (strain 168)</name>
    <dbReference type="NCBI Taxonomy" id="224308"/>
    <lineage>
        <taxon>Bacteria</taxon>
        <taxon>Bacillati</taxon>
        <taxon>Bacillota</taxon>
        <taxon>Bacilli</taxon>
        <taxon>Bacillales</taxon>
        <taxon>Bacillaceae</taxon>
        <taxon>Bacillus</taxon>
    </lineage>
</organism>
<keyword id="KW-0129">CBS domain</keyword>
<keyword id="KW-1003">Cell membrane</keyword>
<keyword id="KW-0472">Membrane</keyword>
<keyword id="KW-1185">Reference proteome</keyword>
<keyword id="KW-0677">Repeat</keyword>
<keyword id="KW-0812">Transmembrane</keyword>
<keyword id="KW-1133">Transmembrane helix</keyword>
<evidence type="ECO:0000255" key="1"/>
<evidence type="ECO:0000255" key="2">
    <source>
        <dbReference type="PROSITE-ProRule" id="PRU00703"/>
    </source>
</evidence>
<evidence type="ECO:0000255" key="3">
    <source>
        <dbReference type="PROSITE-ProRule" id="PRU01193"/>
    </source>
</evidence>
<evidence type="ECO:0000305" key="4"/>
<comment type="subcellular location">
    <subcellularLocation>
        <location evidence="4">Cell membrane</location>
        <topology evidence="4">Multi-pass membrane protein</topology>
    </subcellularLocation>
</comment>
<comment type="similarity">
    <text evidence="4">Belongs to the UPF0053 family.</text>
</comment>